<accession>Q641C8</accession>
<keyword id="KW-0050">Antiport</keyword>
<keyword id="KW-0472">Membrane</keyword>
<keyword id="KW-0496">Mitochondrion</keyword>
<keyword id="KW-0999">Mitochondrion inner membrane</keyword>
<keyword id="KW-1185">Reference proteome</keyword>
<keyword id="KW-0677">Repeat</keyword>
<keyword id="KW-0949">S-adenosyl-L-methionine</keyword>
<keyword id="KW-0812">Transmembrane</keyword>
<keyword id="KW-1133">Transmembrane helix</keyword>
<keyword id="KW-0813">Transport</keyword>
<comment type="function">
    <text evidence="1">Mitochondrial S-adenosyl-L-methionine/S-adenosyl-L-homocysteine antiporter. Mediates the exchange of cytosolic S-adenosyl-L-methionine, the predominant methyl-group donor for macromolecule methylation processes, for mitochondrial S-adenosylhomocysteine(SAH), a by-product of methylation reactions.</text>
</comment>
<comment type="catalytic activity">
    <reaction evidence="1">
        <text>S-adenosyl-L-homocysteine(out) + S-adenosyl-L-methionine(in) = S-adenosyl-L-homocysteine(in) + S-adenosyl-L-methionine(out)</text>
        <dbReference type="Rhea" id="RHEA:75479"/>
        <dbReference type="ChEBI" id="CHEBI:57856"/>
        <dbReference type="ChEBI" id="CHEBI:59789"/>
    </reaction>
</comment>
<comment type="subcellular location">
    <subcellularLocation>
        <location evidence="1">Mitochondrion inner membrane</location>
        <topology evidence="2">Multi-pass membrane protein</topology>
    </subcellularLocation>
</comment>
<comment type="similarity">
    <text evidence="3">Belongs to the mitochondrial carrier (TC 2.A.29) family.</text>
</comment>
<proteinExistence type="evidence at transcript level"/>
<feature type="chain" id="PRO_0000317590" description="Mitochondrial S-adenosylmethionine carrier protein">
    <location>
        <begin position="1"/>
        <end position="266"/>
    </location>
</feature>
<feature type="transmembrane region" description="Helical; Name=1" evidence="2">
    <location>
        <begin position="5"/>
        <end position="25"/>
    </location>
</feature>
<feature type="transmembrane region" description="Helical; Name=2" evidence="2">
    <location>
        <begin position="49"/>
        <end position="69"/>
    </location>
</feature>
<feature type="transmembrane region" description="Helical; Name=3" evidence="2">
    <location>
        <begin position="84"/>
        <end position="104"/>
    </location>
</feature>
<feature type="transmembrane region" description="Helical; Name=4" evidence="2">
    <location>
        <begin position="141"/>
        <end position="161"/>
    </location>
</feature>
<feature type="transmembrane region" description="Helical; Name=5" evidence="2">
    <location>
        <begin position="181"/>
        <end position="201"/>
    </location>
</feature>
<feature type="transmembrane region" description="Helical; Name=6" evidence="2">
    <location>
        <begin position="237"/>
        <end position="257"/>
    </location>
</feature>
<feature type="repeat" description="Solcar 1">
    <location>
        <begin position="4"/>
        <end position="77"/>
    </location>
</feature>
<feature type="repeat" description="Solcar 2">
    <location>
        <begin position="85"/>
        <end position="167"/>
    </location>
</feature>
<feature type="repeat" description="Solcar 3">
    <location>
        <begin position="176"/>
        <end position="264"/>
    </location>
</feature>
<evidence type="ECO:0000250" key="1">
    <source>
        <dbReference type="UniProtKB" id="Q70HW3"/>
    </source>
</evidence>
<evidence type="ECO:0000255" key="2"/>
<evidence type="ECO:0000305" key="3"/>
<dbReference type="EMBL" id="BC082409">
    <property type="protein sequence ID" value="AAH82409.1"/>
    <property type="molecule type" value="mRNA"/>
</dbReference>
<dbReference type="EMBL" id="BC130059">
    <property type="protein sequence ID" value="AAI30060.1"/>
    <property type="molecule type" value="mRNA"/>
</dbReference>
<dbReference type="RefSeq" id="NP_001087879.1">
    <property type="nucleotide sequence ID" value="NM_001094410.1"/>
</dbReference>
<dbReference type="SMR" id="Q641C8"/>
<dbReference type="DNASU" id="447740"/>
<dbReference type="GeneID" id="447740"/>
<dbReference type="KEGG" id="xla:447740"/>
<dbReference type="AGR" id="Xenbase:XB-GENE-991476"/>
<dbReference type="CTD" id="447740"/>
<dbReference type="Xenbase" id="XB-GENE-991476">
    <property type="gene designation" value="slc25a26.L"/>
</dbReference>
<dbReference type="OrthoDB" id="276989at2759"/>
<dbReference type="Proteomes" id="UP000186698">
    <property type="component" value="Chromosome 4L"/>
</dbReference>
<dbReference type="Bgee" id="447740">
    <property type="expression patterns" value="Expressed in oocyte and 19 other cell types or tissues"/>
</dbReference>
<dbReference type="GO" id="GO:0005743">
    <property type="term" value="C:mitochondrial inner membrane"/>
    <property type="evidence" value="ECO:0000250"/>
    <property type="project" value="UniProtKB"/>
</dbReference>
<dbReference type="GO" id="GO:0000095">
    <property type="term" value="F:S-adenosyl-L-methionine transmembrane transporter activity"/>
    <property type="evidence" value="ECO:0000250"/>
    <property type="project" value="UniProtKB"/>
</dbReference>
<dbReference type="GO" id="GO:0180003">
    <property type="term" value="F:S-adenosyl-L-methionine:S-adenosyl-L-homocysteine antiporter activity"/>
    <property type="evidence" value="ECO:0000250"/>
    <property type="project" value="UniProtKB"/>
</dbReference>
<dbReference type="GO" id="GO:1990543">
    <property type="term" value="P:mitochondrial S-adenosyl-L-methionine transmembrane transport"/>
    <property type="evidence" value="ECO:0000250"/>
    <property type="project" value="UniProtKB"/>
</dbReference>
<dbReference type="GO" id="GO:0015805">
    <property type="term" value="P:S-adenosyl-L-methionine transport"/>
    <property type="evidence" value="ECO:0000250"/>
    <property type="project" value="UniProtKB"/>
</dbReference>
<dbReference type="FunFam" id="1.50.40.10:FF:000018">
    <property type="entry name" value="S-adenosylmethionine mitochondrial carrier protein-like"/>
    <property type="match status" value="1"/>
</dbReference>
<dbReference type="Gene3D" id="1.50.40.10">
    <property type="entry name" value="Mitochondrial carrier domain"/>
    <property type="match status" value="1"/>
</dbReference>
<dbReference type="InterPro" id="IPR002067">
    <property type="entry name" value="Mit_carrier"/>
</dbReference>
<dbReference type="InterPro" id="IPR018108">
    <property type="entry name" value="Mitochondrial_sb/sol_carrier"/>
</dbReference>
<dbReference type="InterPro" id="IPR023395">
    <property type="entry name" value="Mt_carrier_dom_sf"/>
</dbReference>
<dbReference type="PANTHER" id="PTHR45667">
    <property type="entry name" value="S-ADENOSYLMETHIONINE MITOCHONDRIAL CARRIER PROTEIN"/>
    <property type="match status" value="1"/>
</dbReference>
<dbReference type="Pfam" id="PF00153">
    <property type="entry name" value="Mito_carr"/>
    <property type="match status" value="4"/>
</dbReference>
<dbReference type="PRINTS" id="PR00926">
    <property type="entry name" value="MITOCARRIER"/>
</dbReference>
<dbReference type="SUPFAM" id="SSF103506">
    <property type="entry name" value="Mitochondrial carrier"/>
    <property type="match status" value="1"/>
</dbReference>
<dbReference type="PROSITE" id="PS50920">
    <property type="entry name" value="SOLCAR"/>
    <property type="match status" value="3"/>
</dbReference>
<name>SAMC_XENLA</name>
<protein>
    <recommendedName>
        <fullName evidence="1">Mitochondrial S-adenosylmethionine carrier protein</fullName>
        <shortName evidence="1">SAM carrier</shortName>
    </recommendedName>
    <alternativeName>
        <fullName>Solute carrier family 25 member 26</fullName>
    </alternativeName>
</protein>
<organism>
    <name type="scientific">Xenopus laevis</name>
    <name type="common">African clawed frog</name>
    <dbReference type="NCBI Taxonomy" id="8355"/>
    <lineage>
        <taxon>Eukaryota</taxon>
        <taxon>Metazoa</taxon>
        <taxon>Chordata</taxon>
        <taxon>Craniata</taxon>
        <taxon>Vertebrata</taxon>
        <taxon>Euteleostomi</taxon>
        <taxon>Amphibia</taxon>
        <taxon>Batrachia</taxon>
        <taxon>Anura</taxon>
        <taxon>Pipoidea</taxon>
        <taxon>Pipidae</taxon>
        <taxon>Xenopodinae</taxon>
        <taxon>Xenopus</taxon>
        <taxon>Xenopus</taxon>
    </lineage>
</organism>
<reference key="1">
    <citation type="submission" date="2006-12" db="EMBL/GenBank/DDBJ databases">
        <authorList>
            <consortium name="NIH - Xenopus Gene Collection (XGC) project"/>
        </authorList>
    </citation>
    <scope>NUCLEOTIDE SEQUENCE [LARGE SCALE MRNA]</scope>
    <source>
        <tissue>Kidney</tissue>
    </source>
</reference>
<sequence>MERRELCASLLAGGAAGMSVDLILFPLDTIKTRLQSPLGFSKSGGFRGIYAGVPSTAVGSFPNAAAFFVTYESAKRFLGSDSSYLSPIIHMAAAFLGELVACLIRVPSEVIKQRAQVSPSSTTYQMLSVTLREEGIKGLYRGYKSTVLREIPFSLVQFPLWEFLKNLWSWKQGRAVDCWQSAVCGAFAGGFAAAVTTPLDVAKTRIMLAKAGSGVANGNVLFALHEIWRTQGIMGLFAGVIPRMTMISLGGFIFLGAYDKVRSSLL</sequence>
<gene>
    <name type="primary">slc25a26</name>
    <name evidence="1" type="synonym">samc</name>
</gene>